<dbReference type="EMBL" id="L77117">
    <property type="protein sequence ID" value="AAB98281.1"/>
    <property type="molecule type" value="Genomic_DNA"/>
</dbReference>
<dbReference type="PIR" id="A64336">
    <property type="entry name" value="A64336"/>
</dbReference>
<dbReference type="RefSeq" id="WP_010869786.1">
    <property type="nucleotide sequence ID" value="NC_000909.1"/>
</dbReference>
<dbReference type="STRING" id="243232.MJ_0288"/>
<dbReference type="PaxDb" id="243232-MJ_0288"/>
<dbReference type="DNASU" id="1451143"/>
<dbReference type="EnsemblBacteria" id="AAB98281">
    <property type="protein sequence ID" value="AAB98281"/>
    <property type="gene ID" value="MJ_0288"/>
</dbReference>
<dbReference type="GeneID" id="1451143"/>
<dbReference type="KEGG" id="mja:MJ_0288"/>
<dbReference type="eggNOG" id="arCOG09662">
    <property type="taxonomic scope" value="Archaea"/>
</dbReference>
<dbReference type="HOGENOM" id="CLU_1529261_0_0_2"/>
<dbReference type="InParanoid" id="Q57736"/>
<dbReference type="OrthoDB" id="65222at2157"/>
<dbReference type="Proteomes" id="UP000000805">
    <property type="component" value="Chromosome"/>
</dbReference>
<dbReference type="GO" id="GO:0005886">
    <property type="term" value="C:plasma membrane"/>
    <property type="evidence" value="ECO:0007669"/>
    <property type="project" value="UniProtKB-SubCell"/>
</dbReference>
<dbReference type="Gene3D" id="2.60.40.10">
    <property type="entry name" value="Immunoglobulins"/>
    <property type="match status" value="1"/>
</dbReference>
<dbReference type="InterPro" id="IPR013783">
    <property type="entry name" value="Ig-like_fold"/>
</dbReference>
<reference key="1">
    <citation type="journal article" date="1996" name="Science">
        <title>Complete genome sequence of the methanogenic archaeon, Methanococcus jannaschii.</title>
        <authorList>
            <person name="Bult C.J."/>
            <person name="White O."/>
            <person name="Olsen G.J."/>
            <person name="Zhou L."/>
            <person name="Fleischmann R.D."/>
            <person name="Sutton G.G."/>
            <person name="Blake J.A."/>
            <person name="FitzGerald L.M."/>
            <person name="Clayton R.A."/>
            <person name="Gocayne J.D."/>
            <person name="Kerlavage A.R."/>
            <person name="Dougherty B.A."/>
            <person name="Tomb J.-F."/>
            <person name="Adams M.D."/>
            <person name="Reich C.I."/>
            <person name="Overbeek R."/>
            <person name="Kirkness E.F."/>
            <person name="Weinstock K.G."/>
            <person name="Merrick J.M."/>
            <person name="Glodek A."/>
            <person name="Scott J.L."/>
            <person name="Geoghagen N.S.M."/>
            <person name="Weidman J.F."/>
            <person name="Fuhrmann J.L."/>
            <person name="Nguyen D."/>
            <person name="Utterback T.R."/>
            <person name="Kelley J.M."/>
            <person name="Peterson J.D."/>
            <person name="Sadow P.W."/>
            <person name="Hanna M.C."/>
            <person name="Cotton M.D."/>
            <person name="Roberts K.M."/>
            <person name="Hurst M.A."/>
            <person name="Kaine B.P."/>
            <person name="Borodovsky M."/>
            <person name="Klenk H.-P."/>
            <person name="Fraser C.M."/>
            <person name="Smith H.O."/>
            <person name="Woese C.R."/>
            <person name="Venter J.C."/>
        </authorList>
    </citation>
    <scope>NUCLEOTIDE SEQUENCE [LARGE SCALE GENOMIC DNA]</scope>
    <source>
        <strain>ATCC 43067 / DSM 2661 / JAL-1 / JCM 10045 / NBRC 100440</strain>
    </source>
</reference>
<accession>Q57736</accession>
<proteinExistence type="predicted"/>
<gene>
    <name type="ordered locus">MJ0288</name>
</gene>
<organism>
    <name type="scientific">Methanocaldococcus jannaschii (strain ATCC 43067 / DSM 2661 / JAL-1 / JCM 10045 / NBRC 100440)</name>
    <name type="common">Methanococcus jannaschii</name>
    <dbReference type="NCBI Taxonomy" id="243232"/>
    <lineage>
        <taxon>Archaea</taxon>
        <taxon>Methanobacteriati</taxon>
        <taxon>Methanobacteriota</taxon>
        <taxon>Methanomada group</taxon>
        <taxon>Methanococci</taxon>
        <taxon>Methanococcales</taxon>
        <taxon>Methanocaldococcaceae</taxon>
        <taxon>Methanocaldococcus</taxon>
    </lineage>
</organism>
<protein>
    <recommendedName>
        <fullName>Uncharacterized protein MJ0288</fullName>
    </recommendedName>
</protein>
<sequence length="178" mass="19266">MKKFSAIFGLLSVIFVIMAISQVSGLSGAITPPKIDIMVNASNGLPQDINSIIYVKNPNSFPVKVEMVTTGDLNNSKKVEVKIMKNNFTLKPGETVGVNITFTVKEKDNYEGDILTKISPVDYGDDKKGVNLKASVVLPTKVAIMVVGNEIHTKELVITAVLIISILGLGAMLIRRHL</sequence>
<evidence type="ECO:0000255" key="1"/>
<evidence type="ECO:0000305" key="2"/>
<name>Y288_METJA</name>
<keyword id="KW-1003">Cell membrane</keyword>
<keyword id="KW-0472">Membrane</keyword>
<keyword id="KW-1185">Reference proteome</keyword>
<keyword id="KW-0812">Transmembrane</keyword>
<keyword id="KW-1133">Transmembrane helix</keyword>
<comment type="subcellular location">
    <subcellularLocation>
        <location evidence="2">Cell membrane</location>
        <topology evidence="2">Multi-pass membrane protein</topology>
    </subcellularLocation>
</comment>
<feature type="chain" id="PRO_0000106775" description="Uncharacterized protein MJ0288">
    <location>
        <begin position="1"/>
        <end position="178"/>
    </location>
</feature>
<feature type="transmembrane region" description="Helical" evidence="1">
    <location>
        <begin position="6"/>
        <end position="26"/>
    </location>
</feature>
<feature type="transmembrane region" description="Helical" evidence="1">
    <location>
        <begin position="154"/>
        <end position="174"/>
    </location>
</feature>